<gene>
    <name evidence="1" type="primary">rplD</name>
    <name type="ordered locus">A1I_02040</name>
</gene>
<accession>A8GVB5</accession>
<organism>
    <name type="scientific">Rickettsia bellii (strain OSU 85-389)</name>
    <dbReference type="NCBI Taxonomy" id="391896"/>
    <lineage>
        <taxon>Bacteria</taxon>
        <taxon>Pseudomonadati</taxon>
        <taxon>Pseudomonadota</taxon>
        <taxon>Alphaproteobacteria</taxon>
        <taxon>Rickettsiales</taxon>
        <taxon>Rickettsiaceae</taxon>
        <taxon>Rickettsieae</taxon>
        <taxon>Rickettsia</taxon>
        <taxon>belli group</taxon>
    </lineage>
</organism>
<comment type="function">
    <text evidence="1">One of the primary rRNA binding proteins, this protein initially binds near the 5'-end of the 23S rRNA. It is important during the early stages of 50S assembly. It makes multiple contacts with different domains of the 23S rRNA in the assembled 50S subunit and ribosome.</text>
</comment>
<comment type="function">
    <text evidence="1">Forms part of the polypeptide exit tunnel.</text>
</comment>
<comment type="subunit">
    <text evidence="1">Part of the 50S ribosomal subunit.</text>
</comment>
<comment type="similarity">
    <text evidence="1">Belongs to the universal ribosomal protein uL4 family.</text>
</comment>
<dbReference type="EMBL" id="CP000849">
    <property type="protein sequence ID" value="ABV78792.1"/>
    <property type="molecule type" value="Genomic_DNA"/>
</dbReference>
<dbReference type="RefSeq" id="WP_011477720.1">
    <property type="nucleotide sequence ID" value="NC_009883.1"/>
</dbReference>
<dbReference type="SMR" id="A8GVB5"/>
<dbReference type="KEGG" id="rbo:A1I_02040"/>
<dbReference type="HOGENOM" id="CLU_041575_5_1_5"/>
<dbReference type="GO" id="GO:1990904">
    <property type="term" value="C:ribonucleoprotein complex"/>
    <property type="evidence" value="ECO:0007669"/>
    <property type="project" value="UniProtKB-KW"/>
</dbReference>
<dbReference type="GO" id="GO:0005840">
    <property type="term" value="C:ribosome"/>
    <property type="evidence" value="ECO:0007669"/>
    <property type="project" value="UniProtKB-KW"/>
</dbReference>
<dbReference type="GO" id="GO:0019843">
    <property type="term" value="F:rRNA binding"/>
    <property type="evidence" value="ECO:0007669"/>
    <property type="project" value="UniProtKB-UniRule"/>
</dbReference>
<dbReference type="GO" id="GO:0003735">
    <property type="term" value="F:structural constituent of ribosome"/>
    <property type="evidence" value="ECO:0007669"/>
    <property type="project" value="InterPro"/>
</dbReference>
<dbReference type="GO" id="GO:0006412">
    <property type="term" value="P:translation"/>
    <property type="evidence" value="ECO:0007669"/>
    <property type="project" value="UniProtKB-UniRule"/>
</dbReference>
<dbReference type="FunFam" id="3.40.1370.10:FF:000015">
    <property type="entry name" value="50S ribosomal protein L4"/>
    <property type="match status" value="1"/>
</dbReference>
<dbReference type="Gene3D" id="3.40.1370.10">
    <property type="match status" value="1"/>
</dbReference>
<dbReference type="HAMAP" id="MF_01328_B">
    <property type="entry name" value="Ribosomal_uL4_B"/>
    <property type="match status" value="1"/>
</dbReference>
<dbReference type="InterPro" id="IPR002136">
    <property type="entry name" value="Ribosomal_uL4"/>
</dbReference>
<dbReference type="InterPro" id="IPR013005">
    <property type="entry name" value="Ribosomal_uL4-like"/>
</dbReference>
<dbReference type="InterPro" id="IPR023574">
    <property type="entry name" value="Ribosomal_uL4_dom_sf"/>
</dbReference>
<dbReference type="NCBIfam" id="TIGR03953">
    <property type="entry name" value="rplD_bact"/>
    <property type="match status" value="1"/>
</dbReference>
<dbReference type="PANTHER" id="PTHR10746">
    <property type="entry name" value="50S RIBOSOMAL PROTEIN L4"/>
    <property type="match status" value="1"/>
</dbReference>
<dbReference type="PANTHER" id="PTHR10746:SF6">
    <property type="entry name" value="LARGE RIBOSOMAL SUBUNIT PROTEIN UL4M"/>
    <property type="match status" value="1"/>
</dbReference>
<dbReference type="Pfam" id="PF00573">
    <property type="entry name" value="Ribosomal_L4"/>
    <property type="match status" value="1"/>
</dbReference>
<dbReference type="SUPFAM" id="SSF52166">
    <property type="entry name" value="Ribosomal protein L4"/>
    <property type="match status" value="1"/>
</dbReference>
<sequence>MKTKILNLANEEIGEISLNEDIFAVEFIRDDIIKQVVDWQRAKAMAGTHKTKTVSEVSGTTKKPFKQKGTGNARQGSLRSVQMRGGGVIHGPVVRSHATKLPKKVRKLGLIHALSEKFSEGKLLVIDSLKLETPKTSNLVNILNKFQGKSFFVIDGNEVDVNFSLAAQNIYNTVVVPQIGANVYDIIRHEYVLLSQEAVNVLEERLK</sequence>
<name>RL4_RICB8</name>
<feature type="chain" id="PRO_1000052484" description="Large ribosomal subunit protein uL4">
    <location>
        <begin position="1"/>
        <end position="207"/>
    </location>
</feature>
<feature type="region of interest" description="Disordered" evidence="2">
    <location>
        <begin position="53"/>
        <end position="76"/>
    </location>
</feature>
<protein>
    <recommendedName>
        <fullName evidence="1">Large ribosomal subunit protein uL4</fullName>
    </recommendedName>
    <alternativeName>
        <fullName evidence="3">50S ribosomal protein L4</fullName>
    </alternativeName>
</protein>
<evidence type="ECO:0000255" key="1">
    <source>
        <dbReference type="HAMAP-Rule" id="MF_01328"/>
    </source>
</evidence>
<evidence type="ECO:0000256" key="2">
    <source>
        <dbReference type="SAM" id="MobiDB-lite"/>
    </source>
</evidence>
<evidence type="ECO:0000305" key="3"/>
<keyword id="KW-0687">Ribonucleoprotein</keyword>
<keyword id="KW-0689">Ribosomal protein</keyword>
<keyword id="KW-0694">RNA-binding</keyword>
<keyword id="KW-0699">rRNA-binding</keyword>
<reference key="1">
    <citation type="submission" date="2007-09" db="EMBL/GenBank/DDBJ databases">
        <title>Complete genome sequencing of Rickettsia bellii.</title>
        <authorList>
            <person name="Madan A."/>
            <person name="Lee H."/>
            <person name="Madan A."/>
            <person name="Yoon J.-G."/>
            <person name="Ryu G.-Y."/>
            <person name="Dasch G."/>
            <person name="Ereemeva M."/>
        </authorList>
    </citation>
    <scope>NUCLEOTIDE SEQUENCE [LARGE SCALE GENOMIC DNA]</scope>
    <source>
        <strain>OSU 85-389</strain>
    </source>
</reference>
<proteinExistence type="inferred from homology"/>